<keyword id="KW-0002">3D-structure</keyword>
<keyword id="KW-0903">Direct protein sequencing</keyword>
<keyword id="KW-0430">Lectin</keyword>
<keyword id="KW-1185">Reference proteome</keyword>
<keyword id="KW-0677">Repeat</keyword>
<evidence type="ECO:0000255" key="1">
    <source>
        <dbReference type="PROSITE-ProRule" id="PRU01088"/>
    </source>
</evidence>
<evidence type="ECO:0000269" key="2">
    <source>
    </source>
</evidence>
<evidence type="ECO:0000305" key="3"/>
<evidence type="ECO:0007829" key="4">
    <source>
        <dbReference type="PDB" id="5GVY"/>
    </source>
</evidence>
<feature type="initiator methionine" description="Removed" evidence="2">
    <location>
        <position position="1"/>
    </location>
</feature>
<feature type="chain" id="PRO_0000300253" description="Salt stress-induced protein">
    <location>
        <begin position="2"/>
        <end position="145"/>
    </location>
</feature>
<feature type="domain" description="Jacalin-type lectin" evidence="1">
    <location>
        <begin position="3"/>
        <end position="145"/>
    </location>
</feature>
<feature type="repeat" description="1">
    <location>
        <begin position="6"/>
        <end position="15"/>
    </location>
</feature>
<feature type="repeat" description="2">
    <location>
        <begin position="54"/>
        <end position="64"/>
    </location>
</feature>
<feature type="region of interest" description="2 X approximate repeats, Gly-rich">
    <location>
        <begin position="6"/>
        <end position="64"/>
    </location>
</feature>
<feature type="sequence conflict" description="In Ref. 4; ABR25535." evidence="3" ref="4">
    <original>L</original>
    <variation>P</variation>
    <location>
        <position position="8"/>
    </location>
</feature>
<feature type="sequence conflict" description="In Ref. 4; ABR25535/ABR26121." evidence="3" ref="4">
    <original>H</original>
    <variation>Q</variation>
    <location>
        <position position="74"/>
    </location>
</feature>
<feature type="sequence conflict" description="In Ref. 4; ABR26121." evidence="3" ref="4">
    <original>E</original>
    <variation>D</variation>
    <location>
        <position position="114"/>
    </location>
</feature>
<feature type="strand" evidence="4">
    <location>
        <begin position="4"/>
        <end position="10"/>
    </location>
</feature>
<feature type="strand" evidence="4">
    <location>
        <begin position="14"/>
        <end position="17"/>
    </location>
</feature>
<feature type="strand" evidence="4">
    <location>
        <begin position="23"/>
        <end position="46"/>
    </location>
</feature>
<feature type="strand" evidence="4">
    <location>
        <begin position="51"/>
        <end position="58"/>
    </location>
</feature>
<feature type="strand" evidence="4">
    <location>
        <begin position="62"/>
        <end position="68"/>
    </location>
</feature>
<feature type="strand" evidence="4">
    <location>
        <begin position="75"/>
        <end position="85"/>
    </location>
</feature>
<feature type="strand" evidence="4">
    <location>
        <begin position="88"/>
        <end position="99"/>
    </location>
</feature>
<feature type="strand" evidence="4">
    <location>
        <begin position="104"/>
        <end position="108"/>
    </location>
</feature>
<feature type="strand" evidence="4">
    <location>
        <begin position="112"/>
        <end position="119"/>
    </location>
</feature>
<feature type="strand" evidence="4">
    <location>
        <begin position="124"/>
        <end position="144"/>
    </location>
</feature>
<reference key="1">
    <citation type="journal article" date="1990" name="Plant Cell">
        <title>Characterization of a rice gene showing organ-specific expression in response to salt stress and drought.</title>
        <authorList>
            <person name="Claes B."/>
            <person name="Dekeyser R."/>
            <person name="Villarroel R."/>
            <person name="van den Bulcke M."/>
            <person name="Bauw G."/>
            <person name="van Montagu M."/>
            <person name="Caplan A."/>
        </authorList>
    </citation>
    <scope>NUCLEOTIDE SEQUENCE [MRNA]</scope>
    <scope>PROTEIN SEQUENCE OF 2-6 AND 132-145</scope>
    <source>
        <strain>cv. Taichung native 1</strain>
        <tissue>Root</tissue>
    </source>
</reference>
<reference key="2">
    <citation type="online journal article" date="1995" name="Plant Gene Register">
        <title>Genomic sequence corresponding to the salT gene from rice.</title>
        <authorList>
            <person name="Garcia A.B."/>
            <person name="Claes B."/>
            <person name="Villarroel R."/>
            <person name="van Montagu M."/>
            <person name="Caplan A."/>
        </authorList>
        <locator>PGR95-013</locator>
    </citation>
    <scope>NUCLEOTIDE SEQUENCE [GENOMIC DNA]</scope>
    <source>
        <strain>cv. Taichung native 1</strain>
    </source>
</reference>
<reference key="3">
    <citation type="journal article" date="2005" name="PLoS Biol.">
        <title>The genomes of Oryza sativa: a history of duplications.</title>
        <authorList>
            <person name="Yu J."/>
            <person name="Wang J."/>
            <person name="Lin W."/>
            <person name="Li S."/>
            <person name="Li H."/>
            <person name="Zhou J."/>
            <person name="Ni P."/>
            <person name="Dong W."/>
            <person name="Hu S."/>
            <person name="Zeng C."/>
            <person name="Zhang J."/>
            <person name="Zhang Y."/>
            <person name="Li R."/>
            <person name="Xu Z."/>
            <person name="Li S."/>
            <person name="Li X."/>
            <person name="Zheng H."/>
            <person name="Cong L."/>
            <person name="Lin L."/>
            <person name="Yin J."/>
            <person name="Geng J."/>
            <person name="Li G."/>
            <person name="Shi J."/>
            <person name="Liu J."/>
            <person name="Lv H."/>
            <person name="Li J."/>
            <person name="Wang J."/>
            <person name="Deng Y."/>
            <person name="Ran L."/>
            <person name="Shi X."/>
            <person name="Wang X."/>
            <person name="Wu Q."/>
            <person name="Li C."/>
            <person name="Ren X."/>
            <person name="Wang J."/>
            <person name="Wang X."/>
            <person name="Li D."/>
            <person name="Liu D."/>
            <person name="Zhang X."/>
            <person name="Ji Z."/>
            <person name="Zhao W."/>
            <person name="Sun Y."/>
            <person name="Zhang Z."/>
            <person name="Bao J."/>
            <person name="Han Y."/>
            <person name="Dong L."/>
            <person name="Ji J."/>
            <person name="Chen P."/>
            <person name="Wu S."/>
            <person name="Liu J."/>
            <person name="Xiao Y."/>
            <person name="Bu D."/>
            <person name="Tan J."/>
            <person name="Yang L."/>
            <person name="Ye C."/>
            <person name="Zhang J."/>
            <person name="Xu J."/>
            <person name="Zhou Y."/>
            <person name="Yu Y."/>
            <person name="Zhang B."/>
            <person name="Zhuang S."/>
            <person name="Wei H."/>
            <person name="Liu B."/>
            <person name="Lei M."/>
            <person name="Yu H."/>
            <person name="Li Y."/>
            <person name="Xu H."/>
            <person name="Wei S."/>
            <person name="He X."/>
            <person name="Fang L."/>
            <person name="Zhang Z."/>
            <person name="Zhang Y."/>
            <person name="Huang X."/>
            <person name="Su Z."/>
            <person name="Tong W."/>
            <person name="Li J."/>
            <person name="Tong Z."/>
            <person name="Li S."/>
            <person name="Ye J."/>
            <person name="Wang L."/>
            <person name="Fang L."/>
            <person name="Lei T."/>
            <person name="Chen C.-S."/>
            <person name="Chen H.-C."/>
            <person name="Xu Z."/>
            <person name="Li H."/>
            <person name="Huang H."/>
            <person name="Zhang F."/>
            <person name="Xu H."/>
            <person name="Li N."/>
            <person name="Zhao C."/>
            <person name="Li S."/>
            <person name="Dong L."/>
            <person name="Huang Y."/>
            <person name="Li L."/>
            <person name="Xi Y."/>
            <person name="Qi Q."/>
            <person name="Li W."/>
            <person name="Zhang B."/>
            <person name="Hu W."/>
            <person name="Zhang Y."/>
            <person name="Tian X."/>
            <person name="Jiao Y."/>
            <person name="Liang X."/>
            <person name="Jin J."/>
            <person name="Gao L."/>
            <person name="Zheng W."/>
            <person name="Hao B."/>
            <person name="Liu S.-M."/>
            <person name="Wang W."/>
            <person name="Yuan L."/>
            <person name="Cao M."/>
            <person name="McDermott J."/>
            <person name="Samudrala R."/>
            <person name="Wang J."/>
            <person name="Wong G.K.-S."/>
            <person name="Yang H."/>
        </authorList>
    </citation>
    <scope>NUCLEOTIDE SEQUENCE [LARGE SCALE GENOMIC DNA]</scope>
    <source>
        <strain>cv. 93-11</strain>
    </source>
</reference>
<reference key="4">
    <citation type="submission" date="2007-04" db="EMBL/GenBank/DDBJ databases">
        <title>A comparative transcriptome map of early and late salinity stress responses in contrasting genotypes of Oryza sativa L.</title>
        <authorList>
            <person name="Kumari S."/>
            <person name="Panjabi V."/>
            <person name="Singla-Pareek S.L."/>
            <person name="Sopory S.K."/>
            <person name="Pareek A."/>
        </authorList>
    </citation>
    <scope>NUCLEOTIDE SEQUENCE [LARGE SCALE MRNA]</scope>
    <source>
        <tissue>Shoot</tissue>
    </source>
</reference>
<organism>
    <name type="scientific">Oryza sativa subsp. indica</name>
    <name type="common">Rice</name>
    <dbReference type="NCBI Taxonomy" id="39946"/>
    <lineage>
        <taxon>Eukaryota</taxon>
        <taxon>Viridiplantae</taxon>
        <taxon>Streptophyta</taxon>
        <taxon>Embryophyta</taxon>
        <taxon>Tracheophyta</taxon>
        <taxon>Spermatophyta</taxon>
        <taxon>Magnoliopsida</taxon>
        <taxon>Liliopsida</taxon>
        <taxon>Poales</taxon>
        <taxon>Poaceae</taxon>
        <taxon>BOP clade</taxon>
        <taxon>Oryzoideae</taxon>
        <taxon>Oryzeae</taxon>
        <taxon>Oryzinae</taxon>
        <taxon>Oryza</taxon>
        <taxon>Oryza sativa</taxon>
    </lineage>
</organism>
<protein>
    <recommendedName>
        <fullName>Salt stress-induced protein</fullName>
        <shortName>Salt protein</shortName>
    </recommendedName>
    <alternativeName>
        <fullName>Protein lectin-like</fullName>
    </alternativeName>
    <alternativeName>
        <fullName>Protein mannose-binding lectin</fullName>
    </alternativeName>
</protein>
<accession>A2WPN7</accession>
<accession>A6MZW5</accession>
<accession>A6N1K1</accession>
<accession>O04184</accession>
<accession>O64441</accession>
<accession>P24120</accession>
<accession>Q7F204</accession>
<proteinExistence type="evidence at protein level"/>
<name>SALT_ORYSI</name>
<sequence length="145" mass="15197">MTLVKIGLWGGNGGSAQDISVPPKKLLGVTIYSSDAIRSIAFNYIGVDGQEYAIGPWGGGEGTSTEIKLGSSEHIKEISGTHGPVYDLADIVTYLKIVTSANNTYEAGVPNGKEFSIPLQDSGHVVGFFGRSGTLIDAIGIYVHP</sequence>
<dbReference type="EMBL" id="S45168">
    <property type="protein sequence ID" value="AAB23484.1"/>
    <property type="molecule type" value="mRNA"/>
</dbReference>
<dbReference type="EMBL" id="Z25811">
    <property type="protein sequence ID" value="CAA81059.1"/>
    <property type="molecule type" value="Genomic_DNA"/>
</dbReference>
<dbReference type="EMBL" id="CM000126">
    <property type="protein sequence ID" value="EAY73933.1"/>
    <property type="status" value="ALT_SEQ"/>
    <property type="molecule type" value="Genomic_DNA"/>
</dbReference>
<dbReference type="EMBL" id="EF575947">
    <property type="protein sequence ID" value="ABR25535.1"/>
    <property type="molecule type" value="mRNA"/>
</dbReference>
<dbReference type="EMBL" id="EF576533">
    <property type="protein sequence ID" value="ABR26121.1"/>
    <property type="molecule type" value="mRNA"/>
</dbReference>
<dbReference type="PIR" id="S37043">
    <property type="entry name" value="S37043"/>
</dbReference>
<dbReference type="PDB" id="5GVY">
    <property type="method" value="X-ray"/>
    <property type="resolution" value="1.66 A"/>
    <property type="chains" value="A/B=1-145"/>
</dbReference>
<dbReference type="PDBsum" id="5GVY"/>
<dbReference type="SASBDB" id="A2WPN7"/>
<dbReference type="SMR" id="A2WPN7"/>
<dbReference type="STRING" id="39946.A2WPN7"/>
<dbReference type="UniLectin" id="A2WPN7"/>
<dbReference type="HOGENOM" id="CLU_714530_0_0_1"/>
<dbReference type="Proteomes" id="UP000007015">
    <property type="component" value="Chromosome 1"/>
</dbReference>
<dbReference type="GO" id="GO:0030246">
    <property type="term" value="F:carbohydrate binding"/>
    <property type="evidence" value="ECO:0007669"/>
    <property type="project" value="UniProtKB-KW"/>
</dbReference>
<dbReference type="CDD" id="cd09612">
    <property type="entry name" value="Jacalin"/>
    <property type="match status" value="1"/>
</dbReference>
<dbReference type="Gene3D" id="2.100.10.30">
    <property type="entry name" value="Jacalin-like lectin domain"/>
    <property type="match status" value="1"/>
</dbReference>
<dbReference type="InterPro" id="IPR001229">
    <property type="entry name" value="Jacalin-like_lectin_dom"/>
</dbReference>
<dbReference type="InterPro" id="IPR033734">
    <property type="entry name" value="Jacalin-like_lectin_dom_plant"/>
</dbReference>
<dbReference type="InterPro" id="IPR036404">
    <property type="entry name" value="Jacalin-like_lectin_dom_sf"/>
</dbReference>
<dbReference type="PANTHER" id="PTHR46506">
    <property type="entry name" value="OS05G0143600 PROTEIN"/>
    <property type="match status" value="1"/>
</dbReference>
<dbReference type="Pfam" id="PF01419">
    <property type="entry name" value="Jacalin"/>
    <property type="match status" value="1"/>
</dbReference>
<dbReference type="SMART" id="SM00915">
    <property type="entry name" value="Jacalin"/>
    <property type="match status" value="1"/>
</dbReference>
<dbReference type="SUPFAM" id="SSF51101">
    <property type="entry name" value="Mannose-binding lectins"/>
    <property type="match status" value="1"/>
</dbReference>
<dbReference type="PROSITE" id="PS51752">
    <property type="entry name" value="JACALIN_LECTIN"/>
    <property type="match status" value="1"/>
</dbReference>
<gene>
    <name type="primary">SALT</name>
    <name type="synonym">ML</name>
    <name type="ORF">OsI_001780</name>
</gene>
<comment type="tissue specificity">
    <text>Sheaths and roots from mature plants and seedlings.</text>
</comment>
<comment type="induction">
    <text>In response to salt and related osmotic stresses.</text>
</comment>
<comment type="sequence caution" evidence="3">
    <conflict type="erroneous gene model prediction">
        <sequence resource="EMBL-CDS" id="EAY73933"/>
    </conflict>
</comment>